<sequence>MEQKIAIALKEIARGTNEIIGLEYIEKLVRKYYETNERFIVKAGFDPTAPDLHLGHTVLIQKLALLQQYGARVKFLIGDFTAMIGDPTGKNETRKPLNREQVLENAKTYEEQIYKILDEKHTEVCFNSTWLDALGAKGMIELCAKFSVARMLERDDFTKRYKENRPISIVEFLYPLLQGYDSVAMDADIELGGNDQKFNLLVGRFLQRAYGLNKEQSVITMPLLEGLDGVQKMSKSLGNYVGITEEPNAMFGKIMSVSDDLMWRYYTLLSTKTLEEIEDLKHGILNQTLHPKAVKEDLASEIVARYYDNDQAIKAKEQFSKVFSANLLPEILSESDFDEGVGILDVLKQIGFCPSTSQARRDIQGGGVKINQEVIKNESYRFVKGNYVIQLGKKRFMKLNIN</sequence>
<dbReference type="EC" id="6.1.1.1" evidence="1"/>
<dbReference type="EMBL" id="AE000511">
    <property type="protein sequence ID" value="AAD07821.1"/>
    <property type="molecule type" value="Genomic_DNA"/>
</dbReference>
<dbReference type="PIR" id="F64616">
    <property type="entry name" value="F64616"/>
</dbReference>
<dbReference type="RefSeq" id="NP_207567.1">
    <property type="nucleotide sequence ID" value="NC_000915.1"/>
</dbReference>
<dbReference type="RefSeq" id="WP_000435642.1">
    <property type="nucleotide sequence ID" value="NC_018939.1"/>
</dbReference>
<dbReference type="SMR" id="P56417"/>
<dbReference type="DIP" id="DIP-3355N"/>
<dbReference type="FunCoup" id="P56417">
    <property type="interactions" value="375"/>
</dbReference>
<dbReference type="IntAct" id="P56417">
    <property type="interactions" value="1"/>
</dbReference>
<dbReference type="MINT" id="P56417"/>
<dbReference type="STRING" id="85962.HP_0774"/>
<dbReference type="PaxDb" id="85962-C694_03975"/>
<dbReference type="EnsemblBacteria" id="AAD07821">
    <property type="protein sequence ID" value="AAD07821"/>
    <property type="gene ID" value="HP_0774"/>
</dbReference>
<dbReference type="KEGG" id="heo:C694_03975"/>
<dbReference type="KEGG" id="hpy:HP_0774"/>
<dbReference type="PATRIC" id="fig|85962.47.peg.826"/>
<dbReference type="eggNOG" id="COG0162">
    <property type="taxonomic scope" value="Bacteria"/>
</dbReference>
<dbReference type="InParanoid" id="P56417"/>
<dbReference type="OrthoDB" id="9804243at2"/>
<dbReference type="PhylomeDB" id="P56417"/>
<dbReference type="Proteomes" id="UP000000429">
    <property type="component" value="Chromosome"/>
</dbReference>
<dbReference type="GO" id="GO:0005829">
    <property type="term" value="C:cytosol"/>
    <property type="evidence" value="ECO:0000318"/>
    <property type="project" value="GO_Central"/>
</dbReference>
<dbReference type="GO" id="GO:0005524">
    <property type="term" value="F:ATP binding"/>
    <property type="evidence" value="ECO:0007669"/>
    <property type="project" value="UniProtKB-UniRule"/>
</dbReference>
<dbReference type="GO" id="GO:0003723">
    <property type="term" value="F:RNA binding"/>
    <property type="evidence" value="ECO:0007669"/>
    <property type="project" value="UniProtKB-KW"/>
</dbReference>
<dbReference type="GO" id="GO:0004831">
    <property type="term" value="F:tyrosine-tRNA ligase activity"/>
    <property type="evidence" value="ECO:0000318"/>
    <property type="project" value="GO_Central"/>
</dbReference>
<dbReference type="GO" id="GO:0043039">
    <property type="term" value="P:tRNA aminoacylation"/>
    <property type="evidence" value="ECO:0000318"/>
    <property type="project" value="GO_Central"/>
</dbReference>
<dbReference type="GO" id="GO:0006437">
    <property type="term" value="P:tyrosyl-tRNA aminoacylation"/>
    <property type="evidence" value="ECO:0007669"/>
    <property type="project" value="UniProtKB-UniRule"/>
</dbReference>
<dbReference type="CDD" id="cd00165">
    <property type="entry name" value="S4"/>
    <property type="match status" value="1"/>
</dbReference>
<dbReference type="CDD" id="cd00805">
    <property type="entry name" value="TyrRS_core"/>
    <property type="match status" value="1"/>
</dbReference>
<dbReference type="FunFam" id="1.10.240.10:FF:000006">
    <property type="entry name" value="Tyrosine--tRNA ligase"/>
    <property type="match status" value="1"/>
</dbReference>
<dbReference type="FunFam" id="3.40.50.620:FF:000061">
    <property type="entry name" value="Tyrosine--tRNA ligase"/>
    <property type="match status" value="1"/>
</dbReference>
<dbReference type="Gene3D" id="3.40.50.620">
    <property type="entry name" value="HUPs"/>
    <property type="match status" value="1"/>
</dbReference>
<dbReference type="Gene3D" id="3.10.290.10">
    <property type="entry name" value="RNA-binding S4 domain"/>
    <property type="match status" value="1"/>
</dbReference>
<dbReference type="Gene3D" id="1.10.240.10">
    <property type="entry name" value="Tyrosyl-Transfer RNA Synthetase"/>
    <property type="match status" value="1"/>
</dbReference>
<dbReference type="HAMAP" id="MF_02007">
    <property type="entry name" value="Tyr_tRNA_synth_type2"/>
    <property type="match status" value="1"/>
</dbReference>
<dbReference type="InterPro" id="IPR001412">
    <property type="entry name" value="aa-tRNA-synth_I_CS"/>
</dbReference>
<dbReference type="InterPro" id="IPR002305">
    <property type="entry name" value="aa-tRNA-synth_Ic"/>
</dbReference>
<dbReference type="InterPro" id="IPR014729">
    <property type="entry name" value="Rossmann-like_a/b/a_fold"/>
</dbReference>
<dbReference type="InterPro" id="IPR002942">
    <property type="entry name" value="S4_RNA-bd"/>
</dbReference>
<dbReference type="InterPro" id="IPR036986">
    <property type="entry name" value="S4_RNA-bd_sf"/>
</dbReference>
<dbReference type="InterPro" id="IPR002307">
    <property type="entry name" value="Tyr-tRNA-ligase"/>
</dbReference>
<dbReference type="InterPro" id="IPR024088">
    <property type="entry name" value="Tyr-tRNA-ligase_bac-type"/>
</dbReference>
<dbReference type="InterPro" id="IPR024108">
    <property type="entry name" value="Tyr-tRNA-ligase_bac_2"/>
</dbReference>
<dbReference type="NCBIfam" id="TIGR00234">
    <property type="entry name" value="tyrS"/>
    <property type="match status" value="1"/>
</dbReference>
<dbReference type="PANTHER" id="PTHR11766:SF1">
    <property type="entry name" value="TYROSINE--TRNA LIGASE"/>
    <property type="match status" value="1"/>
</dbReference>
<dbReference type="PANTHER" id="PTHR11766">
    <property type="entry name" value="TYROSYL-TRNA SYNTHETASE"/>
    <property type="match status" value="1"/>
</dbReference>
<dbReference type="Pfam" id="PF01479">
    <property type="entry name" value="S4"/>
    <property type="match status" value="1"/>
</dbReference>
<dbReference type="Pfam" id="PF00579">
    <property type="entry name" value="tRNA-synt_1b"/>
    <property type="match status" value="1"/>
</dbReference>
<dbReference type="PRINTS" id="PR01040">
    <property type="entry name" value="TRNASYNTHTYR"/>
</dbReference>
<dbReference type="SMART" id="SM00363">
    <property type="entry name" value="S4"/>
    <property type="match status" value="1"/>
</dbReference>
<dbReference type="SUPFAM" id="SSF55174">
    <property type="entry name" value="Alpha-L RNA-binding motif"/>
    <property type="match status" value="1"/>
</dbReference>
<dbReference type="SUPFAM" id="SSF52374">
    <property type="entry name" value="Nucleotidylyl transferase"/>
    <property type="match status" value="1"/>
</dbReference>
<dbReference type="PROSITE" id="PS00178">
    <property type="entry name" value="AA_TRNA_LIGASE_I"/>
    <property type="match status" value="1"/>
</dbReference>
<dbReference type="PROSITE" id="PS50889">
    <property type="entry name" value="S4"/>
    <property type="match status" value="1"/>
</dbReference>
<accession>P56417</accession>
<name>SYY_HELPY</name>
<proteinExistence type="inferred from homology"/>
<evidence type="ECO:0000255" key="1">
    <source>
        <dbReference type="HAMAP-Rule" id="MF_02007"/>
    </source>
</evidence>
<keyword id="KW-0030">Aminoacyl-tRNA synthetase</keyword>
<keyword id="KW-0067">ATP-binding</keyword>
<keyword id="KW-0963">Cytoplasm</keyword>
<keyword id="KW-0436">Ligase</keyword>
<keyword id="KW-0547">Nucleotide-binding</keyword>
<keyword id="KW-0648">Protein biosynthesis</keyword>
<keyword id="KW-1185">Reference proteome</keyword>
<keyword id="KW-0694">RNA-binding</keyword>
<feature type="chain" id="PRO_0000055655" description="Tyrosine--tRNA ligase">
    <location>
        <begin position="1"/>
        <end position="402"/>
    </location>
</feature>
<feature type="domain" description="S4 RNA-binding" evidence="1">
    <location>
        <begin position="341"/>
        <end position="401"/>
    </location>
</feature>
<feature type="short sequence motif" description="'HIGH' region">
    <location>
        <begin position="47"/>
        <end position="56"/>
    </location>
</feature>
<feature type="short sequence motif" description="'KMSKS' region">
    <location>
        <begin position="232"/>
        <end position="236"/>
    </location>
</feature>
<feature type="binding site" evidence="1">
    <location>
        <position position="235"/>
    </location>
    <ligand>
        <name>ATP</name>
        <dbReference type="ChEBI" id="CHEBI:30616"/>
    </ligand>
</feature>
<organism>
    <name type="scientific">Helicobacter pylori (strain ATCC 700392 / 26695)</name>
    <name type="common">Campylobacter pylori</name>
    <dbReference type="NCBI Taxonomy" id="85962"/>
    <lineage>
        <taxon>Bacteria</taxon>
        <taxon>Pseudomonadati</taxon>
        <taxon>Campylobacterota</taxon>
        <taxon>Epsilonproteobacteria</taxon>
        <taxon>Campylobacterales</taxon>
        <taxon>Helicobacteraceae</taxon>
        <taxon>Helicobacter</taxon>
    </lineage>
</organism>
<reference key="1">
    <citation type="journal article" date="1997" name="Nature">
        <title>The complete genome sequence of the gastric pathogen Helicobacter pylori.</title>
        <authorList>
            <person name="Tomb J.-F."/>
            <person name="White O."/>
            <person name="Kerlavage A.R."/>
            <person name="Clayton R.A."/>
            <person name="Sutton G.G."/>
            <person name="Fleischmann R.D."/>
            <person name="Ketchum K.A."/>
            <person name="Klenk H.-P."/>
            <person name="Gill S.R."/>
            <person name="Dougherty B.A."/>
            <person name="Nelson K.E."/>
            <person name="Quackenbush J."/>
            <person name="Zhou L."/>
            <person name="Kirkness E.F."/>
            <person name="Peterson S.N."/>
            <person name="Loftus B.J."/>
            <person name="Richardson D.L."/>
            <person name="Dodson R.J."/>
            <person name="Khalak H.G."/>
            <person name="Glodek A."/>
            <person name="McKenney K."/>
            <person name="FitzGerald L.M."/>
            <person name="Lee N."/>
            <person name="Adams M.D."/>
            <person name="Hickey E.K."/>
            <person name="Berg D.E."/>
            <person name="Gocayne J.D."/>
            <person name="Utterback T.R."/>
            <person name="Peterson J.D."/>
            <person name="Kelley J.M."/>
            <person name="Cotton M.D."/>
            <person name="Weidman J.F."/>
            <person name="Fujii C."/>
            <person name="Bowman C."/>
            <person name="Watthey L."/>
            <person name="Wallin E."/>
            <person name="Hayes W.S."/>
            <person name="Borodovsky M."/>
            <person name="Karp P.D."/>
            <person name="Smith H.O."/>
            <person name="Fraser C.M."/>
            <person name="Venter J.C."/>
        </authorList>
    </citation>
    <scope>NUCLEOTIDE SEQUENCE [LARGE SCALE GENOMIC DNA]</scope>
    <source>
        <strain>ATCC 700392 / 26695</strain>
    </source>
</reference>
<gene>
    <name evidence="1" type="primary">tyrS</name>
    <name type="ordered locus">HP_0774</name>
</gene>
<comment type="function">
    <text evidence="1">Catalyzes the attachment of tyrosine to tRNA(Tyr) in a two-step reaction: tyrosine is first activated by ATP to form Tyr-AMP and then transferred to the acceptor end of tRNA(Tyr).</text>
</comment>
<comment type="catalytic activity">
    <reaction evidence="1">
        <text>tRNA(Tyr) + L-tyrosine + ATP = L-tyrosyl-tRNA(Tyr) + AMP + diphosphate + H(+)</text>
        <dbReference type="Rhea" id="RHEA:10220"/>
        <dbReference type="Rhea" id="RHEA-COMP:9706"/>
        <dbReference type="Rhea" id="RHEA-COMP:9707"/>
        <dbReference type="ChEBI" id="CHEBI:15378"/>
        <dbReference type="ChEBI" id="CHEBI:30616"/>
        <dbReference type="ChEBI" id="CHEBI:33019"/>
        <dbReference type="ChEBI" id="CHEBI:58315"/>
        <dbReference type="ChEBI" id="CHEBI:78442"/>
        <dbReference type="ChEBI" id="CHEBI:78536"/>
        <dbReference type="ChEBI" id="CHEBI:456215"/>
        <dbReference type="EC" id="6.1.1.1"/>
    </reaction>
</comment>
<comment type="subunit">
    <text evidence="1">Homodimer.</text>
</comment>
<comment type="subcellular location">
    <subcellularLocation>
        <location evidence="1">Cytoplasm</location>
    </subcellularLocation>
</comment>
<comment type="similarity">
    <text evidence="1">Belongs to the class-I aminoacyl-tRNA synthetase family. TyrS type 2 subfamily.</text>
</comment>
<protein>
    <recommendedName>
        <fullName evidence="1">Tyrosine--tRNA ligase</fullName>
        <ecNumber evidence="1">6.1.1.1</ecNumber>
    </recommendedName>
    <alternativeName>
        <fullName evidence="1">Tyrosyl-tRNA synthetase</fullName>
        <shortName evidence="1">TyrRS</shortName>
    </alternativeName>
</protein>